<proteinExistence type="predicted"/>
<gene>
    <name type="ordered locus">At1g66300</name>
    <name type="ORF">T27F4.5</name>
</gene>
<name>FDL8_ARATH</name>
<protein>
    <recommendedName>
        <fullName>Putative F-box/FBD/LRR-repeat protein At1g66300</fullName>
    </recommendedName>
</protein>
<dbReference type="EMBL" id="AC020665">
    <property type="protein sequence ID" value="AAG52162.1"/>
    <property type="molecule type" value="Genomic_DNA"/>
</dbReference>
<dbReference type="EMBL" id="CP002684">
    <property type="protein sequence ID" value="AEE34492.1"/>
    <property type="molecule type" value="Genomic_DNA"/>
</dbReference>
<dbReference type="PIR" id="B96688">
    <property type="entry name" value="B96688"/>
</dbReference>
<dbReference type="RefSeq" id="NP_176804.1">
    <property type="nucleotide sequence ID" value="NM_105301.2"/>
</dbReference>
<dbReference type="BioGRID" id="28168">
    <property type="interactions" value="2"/>
</dbReference>
<dbReference type="FunCoup" id="Q9C8Y7">
    <property type="interactions" value="3"/>
</dbReference>
<dbReference type="IntAct" id="Q9C8Y7">
    <property type="interactions" value="2"/>
</dbReference>
<dbReference type="STRING" id="3702.Q9C8Y7"/>
<dbReference type="PaxDb" id="3702-AT1G66300.1"/>
<dbReference type="EnsemblPlants" id="AT1G66300.1">
    <property type="protein sequence ID" value="AT1G66300.1"/>
    <property type="gene ID" value="AT1G66300"/>
</dbReference>
<dbReference type="GeneID" id="842947"/>
<dbReference type="Gramene" id="AT1G66300.1">
    <property type="protein sequence ID" value="AT1G66300.1"/>
    <property type="gene ID" value="AT1G66300"/>
</dbReference>
<dbReference type="KEGG" id="ath:AT1G66300"/>
<dbReference type="Araport" id="AT1G66300"/>
<dbReference type="TAIR" id="AT1G66300"/>
<dbReference type="HOGENOM" id="CLU_010721_1_3_1"/>
<dbReference type="InParanoid" id="Q9C8Y7"/>
<dbReference type="OMA" id="SICCNIW"/>
<dbReference type="PhylomeDB" id="Q9C8Y7"/>
<dbReference type="PRO" id="PR:Q9C8Y7"/>
<dbReference type="Proteomes" id="UP000006548">
    <property type="component" value="Chromosome 1"/>
</dbReference>
<dbReference type="ExpressionAtlas" id="Q9C8Y7">
    <property type="expression patterns" value="baseline and differential"/>
</dbReference>
<dbReference type="CDD" id="cd22160">
    <property type="entry name" value="F-box_AtFBL13-like"/>
    <property type="match status" value="1"/>
</dbReference>
<dbReference type="Gene3D" id="3.80.10.10">
    <property type="entry name" value="Ribonuclease Inhibitor"/>
    <property type="match status" value="1"/>
</dbReference>
<dbReference type="InterPro" id="IPR036047">
    <property type="entry name" value="F-box-like_dom_sf"/>
</dbReference>
<dbReference type="InterPro" id="IPR053781">
    <property type="entry name" value="F-box_AtFBL13-like"/>
</dbReference>
<dbReference type="InterPro" id="IPR001810">
    <property type="entry name" value="F-box_dom"/>
</dbReference>
<dbReference type="InterPro" id="IPR006566">
    <property type="entry name" value="FBD"/>
</dbReference>
<dbReference type="InterPro" id="IPR050232">
    <property type="entry name" value="FBL13/AtMIF1-like"/>
</dbReference>
<dbReference type="InterPro" id="IPR032675">
    <property type="entry name" value="LRR_dom_sf"/>
</dbReference>
<dbReference type="InterPro" id="IPR055411">
    <property type="entry name" value="LRR_FXL15/At3g58940/PEG3-like"/>
</dbReference>
<dbReference type="PANTHER" id="PTHR31900">
    <property type="entry name" value="F-BOX/RNI SUPERFAMILY PROTEIN-RELATED"/>
    <property type="match status" value="1"/>
</dbReference>
<dbReference type="PANTHER" id="PTHR31900:SF33">
    <property type="entry name" value="PROTEIN WITH RNI-LIKE_FBD-LIKE DOMAIN"/>
    <property type="match status" value="1"/>
</dbReference>
<dbReference type="Pfam" id="PF00646">
    <property type="entry name" value="F-box"/>
    <property type="match status" value="1"/>
</dbReference>
<dbReference type="Pfam" id="PF08387">
    <property type="entry name" value="FBD"/>
    <property type="match status" value="1"/>
</dbReference>
<dbReference type="Pfam" id="PF24758">
    <property type="entry name" value="LRR_At5g56370"/>
    <property type="match status" value="1"/>
</dbReference>
<dbReference type="SMART" id="SM00579">
    <property type="entry name" value="FBD"/>
    <property type="match status" value="1"/>
</dbReference>
<dbReference type="SUPFAM" id="SSF81383">
    <property type="entry name" value="F-box domain"/>
    <property type="match status" value="1"/>
</dbReference>
<dbReference type="SUPFAM" id="SSF52047">
    <property type="entry name" value="RNI-like"/>
    <property type="match status" value="1"/>
</dbReference>
<evidence type="ECO:0000256" key="1">
    <source>
        <dbReference type="SAM" id="MobiDB-lite"/>
    </source>
</evidence>
<sequence>MDEDGEKRVRTKRLCSPESSDKKSGYEVDWVRDLPESLICHVLLNLSTKDVIKNCVLSTKWRYLWRYVPGLDLDCSDFTEYNTFVSFVDRFLSTNTESYLNKFKLGFDCDLVGDEETGNAQMARWINDVVKRKVQHLDLEWGALEIPPIVYVCKSLVSLKLCGVILPIPEFVCLPSVKVIVLDWVKFANDLALEMLISGCLVLKSLTLCRSNNDNVKVLRVRSQSLLSFNYNGPNTMGPEYEELIVEIDTPKLQDLTLSHRMTASFIIKNRSSLVGAHINIEFNFCFGEKFDPKNLPKREMIRNFLVGISGVKNMAIAACTLEVIYDYSRCEPLPLFRNLCLLSVEFYEDRWEMLPFFLESCPNLKSLVVGSNRYRMERTSIISGHRCLLSSLEYVEIETPLTGEVFEMKLVSYLLENSPILKKLTIHLHDNSRKKAECEILTIPRRSSSCQVILL</sequence>
<keyword id="KW-0433">Leucine-rich repeat</keyword>
<keyword id="KW-1185">Reference proteome</keyword>
<keyword id="KW-0677">Repeat</keyword>
<feature type="chain" id="PRO_0000283101" description="Putative F-box/FBD/LRR-repeat protein At1g66300">
    <location>
        <begin position="1"/>
        <end position="456"/>
    </location>
</feature>
<feature type="domain" description="F-box">
    <location>
        <begin position="28"/>
        <end position="74"/>
    </location>
</feature>
<feature type="repeat" description="LRR 1">
    <location>
        <begin position="136"/>
        <end position="163"/>
    </location>
</feature>
<feature type="repeat" description="LRR 2">
    <location>
        <begin position="185"/>
        <end position="210"/>
    </location>
</feature>
<feature type="repeat" description="LRR 3">
    <location>
        <begin position="234"/>
        <end position="260"/>
    </location>
</feature>
<feature type="repeat" description="LRR 4">
    <location>
        <begin position="347"/>
        <end position="372"/>
    </location>
</feature>
<feature type="domain" description="FBD">
    <location>
        <begin position="377"/>
        <end position="429"/>
    </location>
</feature>
<feature type="region of interest" description="Disordered" evidence="1">
    <location>
        <begin position="1"/>
        <end position="23"/>
    </location>
</feature>
<accession>Q9C8Y7</accession>
<reference key="1">
    <citation type="journal article" date="2000" name="Nature">
        <title>Sequence and analysis of chromosome 1 of the plant Arabidopsis thaliana.</title>
        <authorList>
            <person name="Theologis A."/>
            <person name="Ecker J.R."/>
            <person name="Palm C.J."/>
            <person name="Federspiel N.A."/>
            <person name="Kaul S."/>
            <person name="White O."/>
            <person name="Alonso J."/>
            <person name="Altafi H."/>
            <person name="Araujo R."/>
            <person name="Bowman C.L."/>
            <person name="Brooks S.Y."/>
            <person name="Buehler E."/>
            <person name="Chan A."/>
            <person name="Chao Q."/>
            <person name="Chen H."/>
            <person name="Cheuk R.F."/>
            <person name="Chin C.W."/>
            <person name="Chung M.K."/>
            <person name="Conn L."/>
            <person name="Conway A.B."/>
            <person name="Conway A.R."/>
            <person name="Creasy T.H."/>
            <person name="Dewar K."/>
            <person name="Dunn P."/>
            <person name="Etgu P."/>
            <person name="Feldblyum T.V."/>
            <person name="Feng J.-D."/>
            <person name="Fong B."/>
            <person name="Fujii C.Y."/>
            <person name="Gill J.E."/>
            <person name="Goldsmith A.D."/>
            <person name="Haas B."/>
            <person name="Hansen N.F."/>
            <person name="Hughes B."/>
            <person name="Huizar L."/>
            <person name="Hunter J.L."/>
            <person name="Jenkins J."/>
            <person name="Johnson-Hopson C."/>
            <person name="Khan S."/>
            <person name="Khaykin E."/>
            <person name="Kim C.J."/>
            <person name="Koo H.L."/>
            <person name="Kremenetskaia I."/>
            <person name="Kurtz D.B."/>
            <person name="Kwan A."/>
            <person name="Lam B."/>
            <person name="Langin-Hooper S."/>
            <person name="Lee A."/>
            <person name="Lee J.M."/>
            <person name="Lenz C.A."/>
            <person name="Li J.H."/>
            <person name="Li Y.-P."/>
            <person name="Lin X."/>
            <person name="Liu S.X."/>
            <person name="Liu Z.A."/>
            <person name="Luros J.S."/>
            <person name="Maiti R."/>
            <person name="Marziali A."/>
            <person name="Militscher J."/>
            <person name="Miranda M."/>
            <person name="Nguyen M."/>
            <person name="Nierman W.C."/>
            <person name="Osborne B.I."/>
            <person name="Pai G."/>
            <person name="Peterson J."/>
            <person name="Pham P.K."/>
            <person name="Rizzo M."/>
            <person name="Rooney T."/>
            <person name="Rowley D."/>
            <person name="Sakano H."/>
            <person name="Salzberg S.L."/>
            <person name="Schwartz J.R."/>
            <person name="Shinn P."/>
            <person name="Southwick A.M."/>
            <person name="Sun H."/>
            <person name="Tallon L.J."/>
            <person name="Tambunga G."/>
            <person name="Toriumi M.J."/>
            <person name="Town C.D."/>
            <person name="Utterback T."/>
            <person name="Van Aken S."/>
            <person name="Vaysberg M."/>
            <person name="Vysotskaia V.S."/>
            <person name="Walker M."/>
            <person name="Wu D."/>
            <person name="Yu G."/>
            <person name="Fraser C.M."/>
            <person name="Venter J.C."/>
            <person name="Davis R.W."/>
        </authorList>
    </citation>
    <scope>NUCLEOTIDE SEQUENCE [LARGE SCALE GENOMIC DNA]</scope>
    <source>
        <strain>cv. Columbia</strain>
    </source>
</reference>
<reference key="2">
    <citation type="journal article" date="2017" name="Plant J.">
        <title>Araport11: a complete reannotation of the Arabidopsis thaliana reference genome.</title>
        <authorList>
            <person name="Cheng C.Y."/>
            <person name="Krishnakumar V."/>
            <person name="Chan A.P."/>
            <person name="Thibaud-Nissen F."/>
            <person name="Schobel S."/>
            <person name="Town C.D."/>
        </authorList>
    </citation>
    <scope>GENOME REANNOTATION</scope>
    <source>
        <strain>cv. Columbia</strain>
    </source>
</reference>
<organism>
    <name type="scientific">Arabidopsis thaliana</name>
    <name type="common">Mouse-ear cress</name>
    <dbReference type="NCBI Taxonomy" id="3702"/>
    <lineage>
        <taxon>Eukaryota</taxon>
        <taxon>Viridiplantae</taxon>
        <taxon>Streptophyta</taxon>
        <taxon>Embryophyta</taxon>
        <taxon>Tracheophyta</taxon>
        <taxon>Spermatophyta</taxon>
        <taxon>Magnoliopsida</taxon>
        <taxon>eudicotyledons</taxon>
        <taxon>Gunneridae</taxon>
        <taxon>Pentapetalae</taxon>
        <taxon>rosids</taxon>
        <taxon>malvids</taxon>
        <taxon>Brassicales</taxon>
        <taxon>Brassicaceae</taxon>
        <taxon>Camelineae</taxon>
        <taxon>Arabidopsis</taxon>
    </lineage>
</organism>